<proteinExistence type="evidence at protein level"/>
<reference key="1">
    <citation type="journal article" date="2003" name="J. Bacteriol.">
        <title>Propane monooxygenase and NAD+-dependent secondary alcohol dehydrogenase in propane metabolism by Gordonia sp. strain TY-5.</title>
        <authorList>
            <person name="Kotani T."/>
            <person name="Yamamoto T."/>
            <person name="Yurimoto H."/>
            <person name="Sakai Y."/>
            <person name="Kato N."/>
        </authorList>
    </citation>
    <scope>NUCLEOTIDE SEQUENCE [GENOMIC DNA]</scope>
    <scope>FUNCTION AS A PROPANE 2-MONOOXYGENASE</scope>
    <scope>CATALYTIC ACTIVITY</scope>
    <scope>INDUCTION BY PROPANE</scope>
    <scope>SUBUNIT</scope>
    <source>
        <strain evidence="10">TY-5</strain>
    </source>
</reference>
<reference key="2">
    <citation type="journal article" date="2011" name="Appl. Environ. Microbiol.">
        <title>Identification of the monooxygenase gene clusters responsible for the regioselective oxidation of phenol to hydroquinone in mycobacteria.</title>
        <authorList>
            <person name="Furuya T."/>
            <person name="Hirose S."/>
            <person name="Osanai H."/>
            <person name="Semba H."/>
            <person name="Kino K."/>
        </authorList>
    </citation>
    <scope>FUNCTION AS A PHENOL 4-MONOOXYGENASE</scope>
    <scope>CATALYTIC ACTIVITY</scope>
    <scope>INDUCTION BY ACETONE</scope>
    <source>
        <strain>TY-5</strain>
    </source>
</reference>
<reference key="3">
    <citation type="journal article" date="2013" name="FEBS J.">
        <title>The mycobacterial binuclear iron monooxygenases require a specific chaperonin-like protein for functional expression in a heterologous host.</title>
        <authorList>
            <person name="Furuya T."/>
            <person name="Hayashi M."/>
            <person name="Semba H."/>
            <person name="Kino K."/>
        </authorList>
    </citation>
    <scope>SUBUNIT</scope>
    <source>
        <strain>TY-5</strain>
    </source>
</reference>
<organism>
    <name type="scientific">Gordonia sp. (strain TY-5)</name>
    <dbReference type="NCBI Taxonomy" id="235467"/>
    <lineage>
        <taxon>Bacteria</taxon>
        <taxon>Bacillati</taxon>
        <taxon>Actinomycetota</taxon>
        <taxon>Actinomycetes</taxon>
        <taxon>Mycobacteriales</taxon>
        <taxon>Gordoniaceae</taxon>
        <taxon>Gordonia</taxon>
    </lineage>
</organism>
<accession>Q768T3</accession>
<name>PRMC_GORST</name>
<dbReference type="EC" id="1.14.13.227" evidence="7"/>
<dbReference type="EMBL" id="AB112920">
    <property type="protein sequence ID" value="BAD03958.1"/>
    <property type="molecule type" value="Genomic_DNA"/>
</dbReference>
<dbReference type="SMR" id="Q768T3"/>
<dbReference type="BioCyc" id="MetaCyc:MONOMER-19809"/>
<dbReference type="BRENDA" id="1.14.13.227">
    <property type="organism ID" value="7737"/>
</dbReference>
<dbReference type="GO" id="GO:0016709">
    <property type="term" value="F:oxidoreductase activity, acting on paired donors, with incorporation or reduction of molecular oxygen, NAD(P)H as one donor, and incorporation of one atom of oxygen"/>
    <property type="evidence" value="ECO:0007669"/>
    <property type="project" value="InterPro"/>
</dbReference>
<dbReference type="CDD" id="cd01058">
    <property type="entry name" value="AAMH_B"/>
    <property type="match status" value="1"/>
</dbReference>
<dbReference type="Gene3D" id="1.10.620.20">
    <property type="entry name" value="Ribonucleotide Reductase, subunit A"/>
    <property type="match status" value="1"/>
</dbReference>
<dbReference type="InterPro" id="IPR009078">
    <property type="entry name" value="Ferritin-like_SF"/>
</dbReference>
<dbReference type="InterPro" id="IPR012078">
    <property type="entry name" value="MP_mOase_hydro"/>
</dbReference>
<dbReference type="InterPro" id="IPR003430">
    <property type="entry name" value="Phenol_Hydrox"/>
</dbReference>
<dbReference type="InterPro" id="IPR012348">
    <property type="entry name" value="RNR-like"/>
</dbReference>
<dbReference type="Pfam" id="PF02332">
    <property type="entry name" value="Phenol_Hydrox"/>
    <property type="match status" value="1"/>
</dbReference>
<dbReference type="PIRSF" id="PIRSF000040">
    <property type="entry name" value="MMOH_comp"/>
    <property type="match status" value="1"/>
</dbReference>
<dbReference type="SUPFAM" id="SSF47240">
    <property type="entry name" value="Ferritin-like"/>
    <property type="match status" value="1"/>
</dbReference>
<sequence>MSAPAQPRERSFPSIEFTDAEADAREFPSSRSRKYNYYQPSKKRATIYEDVTVDVQPDPERHLTQGWIYGFGDGPGGYPKEWTSAQSSNWHQFLDPNEEWEQSIYRNNSAVVHQVDLCLQNAKRARAYDGWNSAWLKFIERNLGAWMHAESGMGLHVFTSIQRSAPTNMINNAVCVNAAHKLRFAQDLALFNLDLSEAEEAFDGSAHKEVWQSAPEWQPTREAVERLTAIGDWAELLFCSNIVFEQLVGSLFRSELVMQVAARNGDYITPTIVGTGEYDYDRDLNYSRALFQMLARDEKHGIDNRKLFSRWMSEWFPGASTRARGLQPIWSQPADKSVTFSSSLEHAKTKFADVLAAIDVDIPEELNK</sequence>
<feature type="chain" id="PRO_0000442964" description="Propane 2-monooxygenase, hydroxylase component small subunit">
    <location>
        <begin position="1"/>
        <end position="368"/>
    </location>
</feature>
<feature type="region of interest" description="Disordered" evidence="1">
    <location>
        <begin position="1"/>
        <end position="33"/>
    </location>
</feature>
<gene>
    <name evidence="4" type="primary">prmC</name>
</gene>
<comment type="function">
    <text evidence="2 3">Component of the propane 2-monooxygenase multicomponent enzyme system which is involved in the degradation of propane via the O2-dependent hydroxylation of propane (PubMed:14645271). Under acetone induction, also able to catalyze the oxidation of phenol to yield hydroquinone (PubMed:21183637).</text>
</comment>
<comment type="catalytic activity">
    <reaction evidence="7">
        <text>propane + NADH + O2 + H(+) = propan-2-ol + NAD(+) + H2O</text>
        <dbReference type="Rhea" id="RHEA:49992"/>
        <dbReference type="ChEBI" id="CHEBI:15377"/>
        <dbReference type="ChEBI" id="CHEBI:15378"/>
        <dbReference type="ChEBI" id="CHEBI:15379"/>
        <dbReference type="ChEBI" id="CHEBI:17824"/>
        <dbReference type="ChEBI" id="CHEBI:32879"/>
        <dbReference type="ChEBI" id="CHEBI:57540"/>
        <dbReference type="ChEBI" id="CHEBI:57945"/>
        <dbReference type="EC" id="1.14.13.227"/>
    </reaction>
</comment>
<comment type="catalytic activity">
    <reaction evidence="8">
        <text>phenol + NADH + O2 + H(+) = hydroquinone + NAD(+) + H2O</text>
        <dbReference type="Rhea" id="RHEA:55796"/>
        <dbReference type="ChEBI" id="CHEBI:15377"/>
        <dbReference type="ChEBI" id="CHEBI:15378"/>
        <dbReference type="ChEBI" id="CHEBI:15379"/>
        <dbReference type="ChEBI" id="CHEBI:15882"/>
        <dbReference type="ChEBI" id="CHEBI:17594"/>
        <dbReference type="ChEBI" id="CHEBI:57540"/>
        <dbReference type="ChEBI" id="CHEBI:57945"/>
    </reaction>
</comment>
<comment type="subunit">
    <text evidence="7 9">The propane 2-monooxygenase multicomponent enzyme system is composed of an electron transfer component and a monooxygenase component interacting with the effector protein PrmD. The electron transfer component is composed of a reductase (PrmB), and the monooxygenase component is formed by a large subunit (PrmA) and a small subunit (PrmC) (PubMed:14645271). Probably requires the presence of the chaperonin-like protein PrmG to ensure a productive folding, resulting of a soluble PrmC, which leads to the active form of PrmABCD (PubMed:23171424).</text>
</comment>
<comment type="induction">
    <text evidence="2 3">By propane and acetone.</text>
</comment>
<comment type="similarity">
    <text evidence="6">Belongs to the TmoE/XamoE family.</text>
</comment>
<evidence type="ECO:0000256" key="1">
    <source>
        <dbReference type="SAM" id="MobiDB-lite"/>
    </source>
</evidence>
<evidence type="ECO:0000269" key="2">
    <source>
    </source>
</evidence>
<evidence type="ECO:0000269" key="3">
    <source>
    </source>
</evidence>
<evidence type="ECO:0000303" key="4">
    <source>
    </source>
</evidence>
<evidence type="ECO:0000303" key="5">
    <source>
    </source>
</evidence>
<evidence type="ECO:0000305" key="6"/>
<evidence type="ECO:0000305" key="7">
    <source>
    </source>
</evidence>
<evidence type="ECO:0000305" key="8">
    <source>
    </source>
</evidence>
<evidence type="ECO:0000305" key="9">
    <source>
    </source>
</evidence>
<evidence type="ECO:0000312" key="10">
    <source>
        <dbReference type="EMBL" id="BAD03958.1"/>
    </source>
</evidence>
<keyword id="KW-0503">Monooxygenase</keyword>
<keyword id="KW-0520">NAD</keyword>
<keyword id="KW-0560">Oxidoreductase</keyword>
<protein>
    <recommendedName>
        <fullName evidence="4">Propane 2-monooxygenase, hydroxylase component small subunit</fullName>
        <shortName evidence="4">Prm</shortName>
        <ecNumber evidence="7">1.14.13.227</ecNumber>
    </recommendedName>
    <alternativeName>
        <fullName evidence="5">Phenol 4-monooxygenase</fullName>
    </alternativeName>
</protein>